<comment type="function">
    <text evidence="4 5">Together with Abl, involved in embryonic neural development. May have a role in eye development. Acts as an adapter protein for SH2-domain containing proteins during sevenless (sev) signaling.</text>
</comment>
<comment type="subunit">
    <text>Binds the SH3 domains of drk via the Pro-rich domain. When phosphorylated, can interact with the SH2 domains of drk. Binds sev via the phosphotyrosine interaction domain (PID).</text>
</comment>
<comment type="subcellular location">
    <subcellularLocation>
        <location evidence="4">Cytoplasm</location>
    </subcellularLocation>
</comment>
<comment type="alternative products">
    <event type="alternative splicing"/>
    <isoform>
        <id>P98081-1</id>
        <name>1</name>
        <sequence type="displayed"/>
    </isoform>
    <isoform>
        <id>P98081-2</id>
        <name>2</name>
        <sequence type="described" ref="VSP_004185"/>
    </isoform>
</comment>
<comment type="tissue specificity">
    <text evidence="4 5">Uniformly expressed in the embryo from blastoderm through gastrulation. Highly expressed in the mesoderm and CNS during germ-band retraction. CNS expression is later localized to axon bundles. Detected in the embryonic PNS and body wall muscles. Expressed in the eye at the morphogenetic furrow and in developing photoreceptor cells posterior to the furrow.</text>
</comment>
<comment type="developmental stage">
    <text evidence="4">Embryonic axonogenesis.</text>
</comment>
<comment type="PTM">
    <text evidence="3 5">Probably phosphorylated by the Abl tyrosine kinase. Phosphorylated on tyrosine residues in response to sevenless activation.</text>
</comment>
<comment type="sequence caution" evidence="7">
    <conflict type="frameshift">
        <sequence resource="EMBL-CDS" id="AAB08527"/>
    </conflict>
</comment>
<comment type="sequence caution" evidence="7">
    <conflict type="miscellaneous discrepancy">
        <sequence resource="EMBL-CDS" id="AAB08527"/>
    </conflict>
    <text>Intron retention.</text>
</comment>
<name>DAB_DROME</name>
<organism>
    <name type="scientific">Drosophila melanogaster</name>
    <name type="common">Fruit fly</name>
    <dbReference type="NCBI Taxonomy" id="7227"/>
    <lineage>
        <taxon>Eukaryota</taxon>
        <taxon>Metazoa</taxon>
        <taxon>Ecdysozoa</taxon>
        <taxon>Arthropoda</taxon>
        <taxon>Hexapoda</taxon>
        <taxon>Insecta</taxon>
        <taxon>Pterygota</taxon>
        <taxon>Neoptera</taxon>
        <taxon>Endopterygota</taxon>
        <taxon>Diptera</taxon>
        <taxon>Brachycera</taxon>
        <taxon>Muscomorpha</taxon>
        <taxon>Ephydroidea</taxon>
        <taxon>Drosophilidae</taxon>
        <taxon>Drosophila</taxon>
        <taxon>Sophophora</taxon>
    </lineage>
</organism>
<accession>P98081</accession>
<accession>Q9VV93</accession>
<proteinExistence type="evidence at protein level"/>
<gene>
    <name type="primary">Dab</name>
    <name type="ORF">CG9695</name>
</gene>
<protein>
    <recommendedName>
        <fullName>Protein disabled</fullName>
    </recommendedName>
</protein>
<reference key="1">
    <citation type="journal article" date="1993" name="Genes Dev.">
        <title>Dosage-sensitive modifiers of Drosophila abl tyrosine kinase function: prospero, a regulator of axonal outgrowth, and disabled, a novel tyrosine kinase substrate.</title>
        <authorList>
            <person name="Gertler F.B."/>
            <person name="Hill K.K."/>
            <person name="Clark M.J."/>
            <person name="Hoffmann F.M."/>
        </authorList>
    </citation>
    <scope>NUCLEOTIDE SEQUENCE [MRNA] (ISOFORMS 1 AND 2)</scope>
    <scope>FUNCTION</scope>
    <scope>SUBCELLULAR LOCATION</scope>
    <scope>TISSUE SPECIFICITY</scope>
    <scope>DEVELOPMENTAL STAGE</scope>
    <scope>PHOSPHORYLATION AT TYR-112; TYR-483; TYR-1604; TYR-1609; TYR-1643; TYR-1646; TYR-1655; TYR-1681; TYR-1768 AND TYR-1905</scope>
    <source>
        <tissue>Embryo</tissue>
    </source>
</reference>
<reference key="2">
    <citation type="journal article" date="2000" name="Science">
        <title>The genome sequence of Drosophila melanogaster.</title>
        <authorList>
            <person name="Adams M.D."/>
            <person name="Celniker S.E."/>
            <person name="Holt R.A."/>
            <person name="Evans C.A."/>
            <person name="Gocayne J.D."/>
            <person name="Amanatides P.G."/>
            <person name="Scherer S.E."/>
            <person name="Li P.W."/>
            <person name="Hoskins R.A."/>
            <person name="Galle R.F."/>
            <person name="George R.A."/>
            <person name="Lewis S.E."/>
            <person name="Richards S."/>
            <person name="Ashburner M."/>
            <person name="Henderson S.N."/>
            <person name="Sutton G.G."/>
            <person name="Wortman J.R."/>
            <person name="Yandell M.D."/>
            <person name="Zhang Q."/>
            <person name="Chen L.X."/>
            <person name="Brandon R.C."/>
            <person name="Rogers Y.-H.C."/>
            <person name="Blazej R.G."/>
            <person name="Champe M."/>
            <person name="Pfeiffer B.D."/>
            <person name="Wan K.H."/>
            <person name="Doyle C."/>
            <person name="Baxter E.G."/>
            <person name="Helt G."/>
            <person name="Nelson C.R."/>
            <person name="Miklos G.L.G."/>
            <person name="Abril J.F."/>
            <person name="Agbayani A."/>
            <person name="An H.-J."/>
            <person name="Andrews-Pfannkoch C."/>
            <person name="Baldwin D."/>
            <person name="Ballew R.M."/>
            <person name="Basu A."/>
            <person name="Baxendale J."/>
            <person name="Bayraktaroglu L."/>
            <person name="Beasley E.M."/>
            <person name="Beeson K.Y."/>
            <person name="Benos P.V."/>
            <person name="Berman B.P."/>
            <person name="Bhandari D."/>
            <person name="Bolshakov S."/>
            <person name="Borkova D."/>
            <person name="Botchan M.R."/>
            <person name="Bouck J."/>
            <person name="Brokstein P."/>
            <person name="Brottier P."/>
            <person name="Burtis K.C."/>
            <person name="Busam D.A."/>
            <person name="Butler H."/>
            <person name="Cadieu E."/>
            <person name="Center A."/>
            <person name="Chandra I."/>
            <person name="Cherry J.M."/>
            <person name="Cawley S."/>
            <person name="Dahlke C."/>
            <person name="Davenport L.B."/>
            <person name="Davies P."/>
            <person name="de Pablos B."/>
            <person name="Delcher A."/>
            <person name="Deng Z."/>
            <person name="Mays A.D."/>
            <person name="Dew I."/>
            <person name="Dietz S.M."/>
            <person name="Dodson K."/>
            <person name="Doup L.E."/>
            <person name="Downes M."/>
            <person name="Dugan-Rocha S."/>
            <person name="Dunkov B.C."/>
            <person name="Dunn P."/>
            <person name="Durbin K.J."/>
            <person name="Evangelista C.C."/>
            <person name="Ferraz C."/>
            <person name="Ferriera S."/>
            <person name="Fleischmann W."/>
            <person name="Fosler C."/>
            <person name="Gabrielian A.E."/>
            <person name="Garg N.S."/>
            <person name="Gelbart W.M."/>
            <person name="Glasser K."/>
            <person name="Glodek A."/>
            <person name="Gong F."/>
            <person name="Gorrell J.H."/>
            <person name="Gu Z."/>
            <person name="Guan P."/>
            <person name="Harris M."/>
            <person name="Harris N.L."/>
            <person name="Harvey D.A."/>
            <person name="Heiman T.J."/>
            <person name="Hernandez J.R."/>
            <person name="Houck J."/>
            <person name="Hostin D."/>
            <person name="Houston K.A."/>
            <person name="Howland T.J."/>
            <person name="Wei M.-H."/>
            <person name="Ibegwam C."/>
            <person name="Jalali M."/>
            <person name="Kalush F."/>
            <person name="Karpen G.H."/>
            <person name="Ke Z."/>
            <person name="Kennison J.A."/>
            <person name="Ketchum K.A."/>
            <person name="Kimmel B.E."/>
            <person name="Kodira C.D."/>
            <person name="Kraft C.L."/>
            <person name="Kravitz S."/>
            <person name="Kulp D."/>
            <person name="Lai Z."/>
            <person name="Lasko P."/>
            <person name="Lei Y."/>
            <person name="Levitsky A.A."/>
            <person name="Li J.H."/>
            <person name="Li Z."/>
            <person name="Liang Y."/>
            <person name="Lin X."/>
            <person name="Liu X."/>
            <person name="Mattei B."/>
            <person name="McIntosh T.C."/>
            <person name="McLeod M.P."/>
            <person name="McPherson D."/>
            <person name="Merkulov G."/>
            <person name="Milshina N.V."/>
            <person name="Mobarry C."/>
            <person name="Morris J."/>
            <person name="Moshrefi A."/>
            <person name="Mount S.M."/>
            <person name="Moy M."/>
            <person name="Murphy B."/>
            <person name="Murphy L."/>
            <person name="Muzny D.M."/>
            <person name="Nelson D.L."/>
            <person name="Nelson D.R."/>
            <person name="Nelson K.A."/>
            <person name="Nixon K."/>
            <person name="Nusskern D.R."/>
            <person name="Pacleb J.M."/>
            <person name="Palazzolo M."/>
            <person name="Pittman G.S."/>
            <person name="Pan S."/>
            <person name="Pollard J."/>
            <person name="Puri V."/>
            <person name="Reese M.G."/>
            <person name="Reinert K."/>
            <person name="Remington K."/>
            <person name="Saunders R.D.C."/>
            <person name="Scheeler F."/>
            <person name="Shen H."/>
            <person name="Shue B.C."/>
            <person name="Siden-Kiamos I."/>
            <person name="Simpson M."/>
            <person name="Skupski M.P."/>
            <person name="Smith T.J."/>
            <person name="Spier E."/>
            <person name="Spradling A.C."/>
            <person name="Stapleton M."/>
            <person name="Strong R."/>
            <person name="Sun E."/>
            <person name="Svirskas R."/>
            <person name="Tector C."/>
            <person name="Turner R."/>
            <person name="Venter E."/>
            <person name="Wang A.H."/>
            <person name="Wang X."/>
            <person name="Wang Z.-Y."/>
            <person name="Wassarman D.A."/>
            <person name="Weinstock G.M."/>
            <person name="Weissenbach J."/>
            <person name="Williams S.M."/>
            <person name="Woodage T."/>
            <person name="Worley K.C."/>
            <person name="Wu D."/>
            <person name="Yang S."/>
            <person name="Yao Q.A."/>
            <person name="Ye J."/>
            <person name="Yeh R.-F."/>
            <person name="Zaveri J.S."/>
            <person name="Zhan M."/>
            <person name="Zhang G."/>
            <person name="Zhao Q."/>
            <person name="Zheng L."/>
            <person name="Zheng X.H."/>
            <person name="Zhong F.N."/>
            <person name="Zhong W."/>
            <person name="Zhou X."/>
            <person name="Zhu S.C."/>
            <person name="Zhu X."/>
            <person name="Smith H.O."/>
            <person name="Gibbs R.A."/>
            <person name="Myers E.W."/>
            <person name="Rubin G.M."/>
            <person name="Venter J.C."/>
        </authorList>
    </citation>
    <scope>NUCLEOTIDE SEQUENCE [LARGE SCALE GENOMIC DNA]</scope>
    <source>
        <strain>Berkeley</strain>
    </source>
</reference>
<reference key="3">
    <citation type="journal article" date="2002" name="Genome Biol.">
        <title>Annotation of the Drosophila melanogaster euchromatic genome: a systematic review.</title>
        <authorList>
            <person name="Misra S."/>
            <person name="Crosby M.A."/>
            <person name="Mungall C.J."/>
            <person name="Matthews B.B."/>
            <person name="Campbell K.S."/>
            <person name="Hradecky P."/>
            <person name="Huang Y."/>
            <person name="Kaminker J.S."/>
            <person name="Millburn G.H."/>
            <person name="Prochnik S.E."/>
            <person name="Smith C.D."/>
            <person name="Tupy J.L."/>
            <person name="Whitfield E.J."/>
            <person name="Bayraktaroglu L."/>
            <person name="Berman B.P."/>
            <person name="Bettencourt B.R."/>
            <person name="Celniker S.E."/>
            <person name="de Grey A.D.N.J."/>
            <person name="Drysdale R.A."/>
            <person name="Harris N.L."/>
            <person name="Richter J."/>
            <person name="Russo S."/>
            <person name="Schroeder A.J."/>
            <person name="Shu S.Q."/>
            <person name="Stapleton M."/>
            <person name="Yamada C."/>
            <person name="Ashburner M."/>
            <person name="Gelbart W.M."/>
            <person name="Rubin G.M."/>
            <person name="Lewis S.E."/>
        </authorList>
    </citation>
    <scope>GENOME REANNOTATION</scope>
    <source>
        <strain>Berkeley</strain>
    </source>
</reference>
<reference key="4">
    <citation type="journal article" date="1998" name="Mol. Cell. Biol.">
        <title>Disabled is a putative adaptor protein that functions during signaling by the sevenless receptor tyrosine kinase.</title>
        <authorList>
            <person name="Le N."/>
            <person name="Simon M.A."/>
        </authorList>
    </citation>
    <scope>FUNCTION</scope>
    <scope>TISSUE SPECIFICITY</scope>
    <scope>PHOSPHORYLATION</scope>
    <scope>INTERACTION WITH DRK AND SEV</scope>
    <scope>MUTAGENESIS OF SER-120</scope>
</reference>
<reference key="5">
    <citation type="journal article" date="2008" name="J. Proteome Res.">
        <title>Phosphoproteome analysis of Drosophila melanogaster embryos.</title>
        <authorList>
            <person name="Zhai B."/>
            <person name="Villen J."/>
            <person name="Beausoleil S.A."/>
            <person name="Mintseris J."/>
            <person name="Gygi S.P."/>
        </authorList>
    </citation>
    <scope>PHOSPHORYLATION [LARGE SCALE ANALYSIS] AT SER-998; SER-1336; SER-1339; SER-1344; SER-1348; SER-1700; SER-1713; SER-1716; SER-1811; SER-1812; SER-1814; SER-1815 AND SER-2074</scope>
    <scope>IDENTIFICATION BY MASS SPECTROMETRY</scope>
    <source>
        <tissue>Embryo</tissue>
    </source>
</reference>
<dbReference type="EMBL" id="L08845">
    <property type="protein sequence ID" value="AAB08527.1"/>
    <property type="status" value="ALT_SEQ"/>
    <property type="molecule type" value="mRNA"/>
</dbReference>
<dbReference type="EMBL" id="AE014296">
    <property type="protein sequence ID" value="AAF49424.2"/>
    <property type="molecule type" value="Genomic_DNA"/>
</dbReference>
<dbReference type="PIR" id="A46299">
    <property type="entry name" value="A46299"/>
</dbReference>
<dbReference type="RefSeq" id="NP_524119.2">
    <molecule id="P98081-1"/>
    <property type="nucleotide sequence ID" value="NM_079395.4"/>
</dbReference>
<dbReference type="SMR" id="P98081"/>
<dbReference type="BioGRID" id="65165">
    <property type="interactions" value="11"/>
</dbReference>
<dbReference type="FunCoup" id="P98081">
    <property type="interactions" value="222"/>
</dbReference>
<dbReference type="IntAct" id="P98081">
    <property type="interactions" value="4"/>
</dbReference>
<dbReference type="STRING" id="7227.FBpp0303222"/>
<dbReference type="GlyGen" id="P98081">
    <property type="glycosylation" value="5 sites, 1 O-linked glycan (1 site)"/>
</dbReference>
<dbReference type="iPTMnet" id="P98081"/>
<dbReference type="PaxDb" id="7227-FBpp0075077"/>
<dbReference type="EnsemblMetazoa" id="FBtr0075318">
    <molecule id="P98081-1"/>
    <property type="protein sequence ID" value="FBpp0075077"/>
    <property type="gene ID" value="FBgn0000414"/>
</dbReference>
<dbReference type="GeneID" id="39866"/>
<dbReference type="KEGG" id="dme:Dmel_CG9695"/>
<dbReference type="AGR" id="FB:FBgn0000414"/>
<dbReference type="CTD" id="39866"/>
<dbReference type="FlyBase" id="FBgn0000414">
    <property type="gene designation" value="Dab"/>
</dbReference>
<dbReference type="VEuPathDB" id="VectorBase:FBgn0000414"/>
<dbReference type="eggNOG" id="KOG3535">
    <property type="taxonomic scope" value="Eukaryota"/>
</dbReference>
<dbReference type="GeneTree" id="ENSGT00940000168807"/>
<dbReference type="InParanoid" id="P98081"/>
<dbReference type="OMA" id="YDYISCQ"/>
<dbReference type="OrthoDB" id="10069833at2759"/>
<dbReference type="SignaLink" id="P98081"/>
<dbReference type="BioGRID-ORCS" id="39866">
    <property type="hits" value="0 hits in 3 CRISPR screens"/>
</dbReference>
<dbReference type="GenomeRNAi" id="39866"/>
<dbReference type="PRO" id="PR:P98081"/>
<dbReference type="Proteomes" id="UP000000803">
    <property type="component" value="Chromosome 3L"/>
</dbReference>
<dbReference type="Bgee" id="FBgn0000414">
    <property type="expression patterns" value="Expressed in adult Malpighian tubule principal cell of initial segment in Malpighian tubule and 226 other cell types or tissues"/>
</dbReference>
<dbReference type="ExpressionAtlas" id="P98081">
    <property type="expression patterns" value="baseline and differential"/>
</dbReference>
<dbReference type="GO" id="GO:0030424">
    <property type="term" value="C:axon"/>
    <property type="evidence" value="ECO:0000314"/>
    <property type="project" value="FlyBase"/>
</dbReference>
<dbReference type="GO" id="GO:0005829">
    <property type="term" value="C:cytosol"/>
    <property type="evidence" value="ECO:0000314"/>
    <property type="project" value="FlyBase"/>
</dbReference>
<dbReference type="GO" id="GO:0098793">
    <property type="term" value="C:presynapse"/>
    <property type="evidence" value="ECO:0007669"/>
    <property type="project" value="GOC"/>
</dbReference>
<dbReference type="GO" id="GO:0005118">
    <property type="term" value="F:sevenless binding"/>
    <property type="evidence" value="ECO:0000353"/>
    <property type="project" value="UniProtKB"/>
</dbReference>
<dbReference type="GO" id="GO:0017124">
    <property type="term" value="F:SH3 domain binding"/>
    <property type="evidence" value="ECO:0007669"/>
    <property type="project" value="UniProtKB-KW"/>
</dbReference>
<dbReference type="GO" id="GO:0035591">
    <property type="term" value="F:signaling adaptor activity"/>
    <property type="evidence" value="ECO:0000304"/>
    <property type="project" value="FlyBase"/>
</dbReference>
<dbReference type="GO" id="GO:0007349">
    <property type="term" value="P:cellularization"/>
    <property type="evidence" value="ECO:0000315"/>
    <property type="project" value="FlyBase"/>
</dbReference>
<dbReference type="GO" id="GO:0072583">
    <property type="term" value="P:clathrin-dependent endocytosis"/>
    <property type="evidence" value="ECO:0000314"/>
    <property type="project" value="FlyBase"/>
</dbReference>
<dbReference type="GO" id="GO:0042051">
    <property type="term" value="P:compound eye photoreceptor development"/>
    <property type="evidence" value="ECO:0000315"/>
    <property type="project" value="FlyBase"/>
</dbReference>
<dbReference type="GO" id="GO:0007391">
    <property type="term" value="P:dorsal closure"/>
    <property type="evidence" value="ECO:0000315"/>
    <property type="project" value="FlyBase"/>
</dbReference>
<dbReference type="GO" id="GO:0008045">
    <property type="term" value="P:motor neuron axon guidance"/>
    <property type="evidence" value="ECO:0000315"/>
    <property type="project" value="FlyBase"/>
</dbReference>
<dbReference type="GO" id="GO:0016319">
    <property type="term" value="P:mushroom body development"/>
    <property type="evidence" value="ECO:0000315"/>
    <property type="project" value="FlyBase"/>
</dbReference>
<dbReference type="GO" id="GO:0045874">
    <property type="term" value="P:positive regulation of sevenless signaling pathway"/>
    <property type="evidence" value="ECO:0000316"/>
    <property type="project" value="FlyBase"/>
</dbReference>
<dbReference type="GO" id="GO:0006898">
    <property type="term" value="P:receptor-mediated endocytosis"/>
    <property type="evidence" value="ECO:0000315"/>
    <property type="project" value="FlyBase"/>
</dbReference>
<dbReference type="GO" id="GO:0048488">
    <property type="term" value="P:synaptic vesicle endocytosis"/>
    <property type="evidence" value="ECO:0000314"/>
    <property type="project" value="FlyBase"/>
</dbReference>
<dbReference type="CDD" id="cd01215">
    <property type="entry name" value="PTB_Dab"/>
    <property type="match status" value="1"/>
</dbReference>
<dbReference type="FunFam" id="2.30.29.30:FF:000262">
    <property type="entry name" value="Disabled, isoform F"/>
    <property type="match status" value="1"/>
</dbReference>
<dbReference type="Gene3D" id="2.30.29.30">
    <property type="entry name" value="Pleckstrin-homology domain (PH domain)/Phosphotyrosine-binding domain (PTB)"/>
    <property type="match status" value="1"/>
</dbReference>
<dbReference type="InterPro" id="IPR048561">
    <property type="entry name" value="Dab_PTB"/>
</dbReference>
<dbReference type="InterPro" id="IPR011993">
    <property type="entry name" value="PH-like_dom_sf"/>
</dbReference>
<dbReference type="InterPro" id="IPR006020">
    <property type="entry name" value="PTB/PI_dom"/>
</dbReference>
<dbReference type="PANTHER" id="PTHR47695">
    <property type="entry name" value="PID DOMAIN-CONTAINING PROTEIN"/>
    <property type="match status" value="1"/>
</dbReference>
<dbReference type="PANTHER" id="PTHR47695:SF3">
    <property type="entry name" value="PID DOMAIN-CONTAINING PROTEIN"/>
    <property type="match status" value="1"/>
</dbReference>
<dbReference type="Pfam" id="PF00640">
    <property type="entry name" value="PID"/>
    <property type="match status" value="1"/>
</dbReference>
<dbReference type="SMART" id="SM00462">
    <property type="entry name" value="PTB"/>
    <property type="match status" value="1"/>
</dbReference>
<dbReference type="SUPFAM" id="SSF50729">
    <property type="entry name" value="PH domain-like"/>
    <property type="match status" value="1"/>
</dbReference>
<dbReference type="PROSITE" id="PS01179">
    <property type="entry name" value="PID"/>
    <property type="match status" value="1"/>
</dbReference>
<sequence length="2224" mass="243072">MVKSLVAKLSTASSNLSLASTFGGGSGAAEETNYAKHRNDPGRFFGDGVQFKAKLIGILEVGEARGDRMCQEALQDLKMAIRAAGEHKQRITIHVTIDGLRLRDEKTGDSLYHHPVHKISFIAQDMTDSRAFGYIFGSPDSGHRFFGIKTDKAASQVVLAMRDLFQVVFELKKKEIEMARQQIQGKSLHDHSSQLASLSSLKSSGLGGMGLGHSDLASGGISSGHALTLLGSSLSTTNGTSRLGVSLDVAKASGSAAKEVSPESVADLVDLEQELTSLQRGISQMERITPNEPTTSSTGGAGHPSLAKSASEDDPFGDSFIYVPSYSILPPPPDSGRNRHKPPNKTPDAVTSLDAMLSPPPGTSSSHGSASAGLQAADNDDDNWLQELDQQNDVFDTSKVVSSSGLGSVLAMAPLASSESTATPTQQLTEVAAGSGPLADLDIGLSTALGNEEQTSTILSLDAFTDLDPLGTGRTRPYVDKKYFFQELKNPPKKLLKELSSGSQAGLGLGLSLGQLDGLFPEDSTTISTTTTTATNITAGNPQQNSANTLTSTASTAASLGQLLSTVALNPDPLPAPISIPTSISHSITPSAELKLLLGHVTNPPNPTGHYYTTEPPTLNSLENPHPPADPVLLPRDTDPFSPTRKKSDPDPFQESDLFAKLDAFEFEAPPAVPAPSIPNLATETKANVFNGPLQVQLPPEKELQLQQPPSTVRNRPTASVSALPSGGALDVISSISNKKMPHLFGQARSFGKSGSDIGSSVNMRRLQESDSLSETEAAPEPPPRPDSTPYSEPPPLPPKKQFSDLVIRPSPANTTQPPTSGRYEYLNSNVTARRTASSVDAPPIPLPSRRVGRSDGCFPGPGRPRKPGHTEDDYLAPLGAPPPLLPPPSQGSSARARPQRQASLGRPQDIYENKAEILQAQAQAQAQAPEVAPSSNTLAPDITLTQLLTLGMDDLAIKLNVPASKLSTMTLVQLTAYLSEYLSSEKSQVHSQERRSSPANTAPAPASTAAVFKVNFDQQTSFVAKFDDTFGEDEPVMPSGSSDSTFVANFANFNDAPTPVPTVSPVVATVPSADRYAVFREIIDQELQQQQQETDLMGDLTPPPVDETQAKEISEGLEVNNVGAELPIDALDVKPAPKIDTKITEVVAQAKDRYAALRDIILVENLFDKPAIATDTQPEKEKDLLQDFPEFSDEFNEDHDLRQIMDHQNVQTHARDRHGLVDSRGFPTEPSSSALTVGDYDEDEDADAGGESSLDSNEKDAEPVSGQDQYEKLSTSTQQLDAAAPALEDVQQLQQQSLPPKQDQKFLSILTAPGGGTKDDIEIDELMHRAISNLSLDSRDRVSPATSSAAPSRGAPGLHTPSQFNDVSTSPIPLQKPGMGPSPVPSQLSAVSQLIDTATKQMMGDKDREKQSWATFDSPKAKGKARLTLPPPPPPASNTSQPDTVESPCSSDPRDDGWSKQQRRWAKKERQQTSSSSRDLSPWDDETPEYLKRRQLAAAQMAHPHQPPMQAPPQHTDRHGYYMRHARRMNSCDEDYDYDGEFVARRDQPQHQQQQRKFKHGLSRSRDNFELESPSWYHHPAHHTWSPQEIEQVRVRSFDRTAYERSSYGPPPPIYDKRGQLRGKYRGDHRDRERERDRDREYRDYARPSYDFDYENVYEERGGRSPLAYKPGRGGGDYLYDRERDRDRERDRKSFDRESLESYESATRRRRSFGSGNDVYGSLDSRDDYRGDRERDRERDREQMKTRSLRKPTTTSGKLRISGDIDYEQDSEQDFQQRSGVRSLQRPNQLGGDVVLPSNAVVGPQRLRKSSGSSPWDGEEPALPGQKSWKRPASAAETERRLAESRRAVALGQTPSDGEKERRFRKKTRARSAKDLATVGAPSASTSAPSRSSYGRGIRDNYDYICPGQRNDDDDDDDEDYVDDEPPTDEDKFERLNRRRHEMHQRMLESERRQMERHQPPSLAKLPGQNRTRGVVANSDYGFVDSYEQTPTPTPRSNASSTGPGGLMMSGGESSAGVTSSKFNFDDGFESDFNQSSPPPAPAGTASSCNSTPAGPVSANANNGGSKSLFRFSNDFSDREKREQFEMDTPPTSTPPITQKLRFDDNVKVSQFDDAAFEDDFAKASFDFEKEQAGSATAGAGGSGAMSRKQNMRTSKLQQRQELIKKSESVNIFAKKQEDPFEDDEFFKSPDQEQAMDQHNDDTEGGKFQWSEDANFAKFDENM</sequence>
<feature type="chain" id="PRO_0000079773" description="Protein disabled">
    <location>
        <begin position="1"/>
        <end position="2224"/>
    </location>
</feature>
<feature type="domain" description="PID" evidence="1">
    <location>
        <begin position="45"/>
        <end position="197"/>
    </location>
</feature>
<feature type="repeat" description="Alternate Arg and acidic residues">
    <location>
        <begin position="1631"/>
        <end position="1642"/>
    </location>
</feature>
<feature type="repeat" description="Alternate Arg and acidic residues">
    <location>
        <begin position="1682"/>
        <end position="1692"/>
    </location>
</feature>
<feature type="repeat" description="Alternate Arg and acidic residues">
    <location>
        <begin position="1733"/>
        <end position="1743"/>
    </location>
</feature>
<feature type="region of interest" description="Disordered" evidence="2">
    <location>
        <begin position="281"/>
        <end position="377"/>
    </location>
</feature>
<feature type="region of interest" description="Disordered" evidence="2">
    <location>
        <begin position="607"/>
        <end position="654"/>
    </location>
</feature>
<feature type="region of interest" description="Disordered" evidence="2">
    <location>
        <begin position="704"/>
        <end position="724"/>
    </location>
</feature>
<feature type="region of interest" description="Disordered" evidence="2">
    <location>
        <begin position="766"/>
        <end position="906"/>
    </location>
</feature>
<feature type="region of interest" description="Disordered" evidence="2">
    <location>
        <begin position="1212"/>
        <end position="1321"/>
    </location>
</feature>
<feature type="region of interest" description="Disordered" evidence="2">
    <location>
        <begin position="1334"/>
        <end position="1519"/>
    </location>
</feature>
<feature type="region of interest" description="Disordered" evidence="2">
    <location>
        <begin position="1545"/>
        <end position="1566"/>
    </location>
</feature>
<feature type="region of interest" description="Disordered" evidence="2">
    <location>
        <begin position="1603"/>
        <end position="2100"/>
    </location>
</feature>
<feature type="region of interest" description="Repeat-rich region">
    <location>
        <begin position="1631"/>
        <end position="1743"/>
    </location>
</feature>
<feature type="region of interest" description="Disordered" evidence="2">
    <location>
        <begin position="2134"/>
        <end position="2164"/>
    </location>
</feature>
<feature type="region of interest" description="Disordered" evidence="2">
    <location>
        <begin position="2177"/>
        <end position="2224"/>
    </location>
</feature>
<feature type="compositionally biased region" description="Low complexity" evidence="2">
    <location>
        <begin position="363"/>
        <end position="377"/>
    </location>
</feature>
<feature type="compositionally biased region" description="Polar residues" evidence="2">
    <location>
        <begin position="711"/>
        <end position="723"/>
    </location>
</feature>
<feature type="compositionally biased region" description="Pro residues" evidence="2">
    <location>
        <begin position="780"/>
        <end position="799"/>
    </location>
</feature>
<feature type="compositionally biased region" description="Polar residues" evidence="2">
    <location>
        <begin position="827"/>
        <end position="839"/>
    </location>
</feature>
<feature type="compositionally biased region" description="Pro residues" evidence="2">
    <location>
        <begin position="880"/>
        <end position="890"/>
    </location>
</feature>
<feature type="compositionally biased region" description="Acidic residues" evidence="2">
    <location>
        <begin position="1240"/>
        <end position="1249"/>
    </location>
</feature>
<feature type="compositionally biased region" description="Polar residues" evidence="2">
    <location>
        <begin position="1267"/>
        <end position="1281"/>
    </location>
</feature>
<feature type="compositionally biased region" description="Low complexity" evidence="2">
    <location>
        <begin position="1292"/>
        <end position="1302"/>
    </location>
</feature>
<feature type="compositionally biased region" description="Polar residues" evidence="2">
    <location>
        <begin position="1361"/>
        <end position="1373"/>
    </location>
</feature>
<feature type="compositionally biased region" description="Polar residues" evidence="2">
    <location>
        <begin position="1386"/>
        <end position="1401"/>
    </location>
</feature>
<feature type="compositionally biased region" description="Polar residues" evidence="2">
    <location>
        <begin position="1438"/>
        <end position="1451"/>
    </location>
</feature>
<feature type="compositionally biased region" description="Basic residues" evidence="2">
    <location>
        <begin position="1555"/>
        <end position="1564"/>
    </location>
</feature>
<feature type="compositionally biased region" description="Basic and acidic residues" evidence="2">
    <location>
        <begin position="1616"/>
        <end position="1647"/>
    </location>
</feature>
<feature type="compositionally biased region" description="Basic and acidic residues" evidence="2">
    <location>
        <begin position="1680"/>
        <end position="1701"/>
    </location>
</feature>
<feature type="compositionally biased region" description="Basic and acidic residues" evidence="2">
    <location>
        <begin position="1725"/>
        <end position="1746"/>
    </location>
</feature>
<feature type="compositionally biased region" description="Polar residues" evidence="2">
    <location>
        <begin position="1775"/>
        <end position="1789"/>
    </location>
</feature>
<feature type="compositionally biased region" description="Basic and acidic residues" evidence="2">
    <location>
        <begin position="1838"/>
        <end position="1848"/>
    </location>
</feature>
<feature type="compositionally biased region" description="Low complexity" evidence="2">
    <location>
        <begin position="1882"/>
        <end position="1894"/>
    </location>
</feature>
<feature type="compositionally biased region" description="Acidic residues" evidence="2">
    <location>
        <begin position="1913"/>
        <end position="1929"/>
    </location>
</feature>
<feature type="compositionally biased region" description="Basic and acidic residues" evidence="2">
    <location>
        <begin position="1945"/>
        <end position="1960"/>
    </location>
</feature>
<feature type="compositionally biased region" description="Polar residues" evidence="2">
    <location>
        <begin position="1988"/>
        <end position="2003"/>
    </location>
</feature>
<feature type="compositionally biased region" description="Polar residues" evidence="2">
    <location>
        <begin position="2013"/>
        <end position="2024"/>
    </location>
</feature>
<feature type="compositionally biased region" description="Polar residues" evidence="2">
    <location>
        <begin position="2050"/>
        <end position="2067"/>
    </location>
</feature>
<feature type="compositionally biased region" description="Basic and acidic residues" evidence="2">
    <location>
        <begin position="2077"/>
        <end position="2086"/>
    </location>
</feature>
<feature type="compositionally biased region" description="Polar residues" evidence="2">
    <location>
        <begin position="2149"/>
        <end position="2162"/>
    </location>
</feature>
<feature type="compositionally biased region" description="Basic and acidic residues" evidence="2">
    <location>
        <begin position="2187"/>
        <end position="2206"/>
    </location>
</feature>
<feature type="modified residue" description="Phosphotyrosine; by ABL" evidence="8">
    <location>
        <position position="112"/>
    </location>
</feature>
<feature type="modified residue" description="Phosphotyrosine; by ABL" evidence="8">
    <location>
        <position position="483"/>
    </location>
</feature>
<feature type="modified residue" description="Phosphoserine" evidence="3">
    <location>
        <position position="998"/>
    </location>
</feature>
<feature type="modified residue" description="Phosphoserine" evidence="3">
    <location>
        <position position="1336"/>
    </location>
</feature>
<feature type="modified residue" description="Phosphoserine" evidence="3">
    <location>
        <position position="1339"/>
    </location>
</feature>
<feature type="modified residue" description="Phosphoserine" evidence="3">
    <location>
        <position position="1344"/>
    </location>
</feature>
<feature type="modified residue" description="Phosphoserine" evidence="3">
    <location>
        <position position="1348"/>
    </location>
</feature>
<feature type="modified residue" description="Phosphotyrosine; by ABL" evidence="8">
    <location>
        <position position="1604"/>
    </location>
</feature>
<feature type="modified residue" description="Phosphotyrosine; by ABL" evidence="8">
    <location>
        <position position="1609"/>
    </location>
</feature>
<feature type="modified residue" description="Phosphotyrosine; by ABL" evidence="8">
    <location>
        <position position="1643"/>
    </location>
</feature>
<feature type="modified residue" description="Phosphotyrosine; by ABL" evidence="8">
    <location>
        <position position="1646"/>
    </location>
</feature>
<feature type="modified residue" description="Phosphotyrosine; by ABL" evidence="8">
    <location>
        <position position="1655"/>
    </location>
</feature>
<feature type="modified residue" description="Phosphotyrosine; by ABL" evidence="8">
    <location>
        <position position="1681"/>
    </location>
</feature>
<feature type="modified residue" description="Phosphoserine" evidence="3">
    <location>
        <position position="1700"/>
    </location>
</feature>
<feature type="modified residue" description="Phosphoserine" evidence="3">
    <location>
        <position position="1713"/>
    </location>
</feature>
<feature type="modified residue" description="Phosphoserine" evidence="3">
    <location>
        <position position="1716"/>
    </location>
</feature>
<feature type="modified residue" description="Phosphotyrosine; by ABL" evidence="8">
    <location>
        <position position="1768"/>
    </location>
</feature>
<feature type="modified residue" description="Phosphoserine" evidence="3">
    <location>
        <position position="1811"/>
    </location>
</feature>
<feature type="modified residue" description="Phosphoserine" evidence="3">
    <location>
        <position position="1812"/>
    </location>
</feature>
<feature type="modified residue" description="Phosphoserine" evidence="3">
    <location>
        <position position="1814"/>
    </location>
</feature>
<feature type="modified residue" description="Phosphoserine" evidence="3">
    <location>
        <position position="1815"/>
    </location>
</feature>
<feature type="modified residue" description="Phosphotyrosine; by ABL" evidence="8">
    <location>
        <position position="1905"/>
    </location>
</feature>
<feature type="modified residue" description="Phosphoserine" evidence="3">
    <location>
        <position position="2074"/>
    </location>
</feature>
<feature type="splice variant" id="VSP_004185" description="In isoform 2." evidence="6">
    <location>
        <begin position="463"/>
        <end position="614"/>
    </location>
</feature>
<feature type="mutagenesis site" description="Greatly reduces sev binding and sev signaling." evidence="5">
    <original>S</original>
    <variation>A</variation>
    <location>
        <position position="120"/>
    </location>
</feature>
<feature type="sequence conflict" description="In Ref. 1; AAB08527." evidence="7" ref="1">
    <original>N</original>
    <variation>T</variation>
    <location>
        <position position="620"/>
    </location>
</feature>
<feature type="sequence conflict" description="In Ref. 1; AAB08527." evidence="7" ref="1">
    <original>LL</original>
    <variation>SW</variation>
    <location>
        <begin position="885"/>
        <end position="886"/>
    </location>
</feature>
<feature type="sequence conflict" description="In Ref. 1; AAB08527." evidence="7" ref="1">
    <original>V</original>
    <variation>M</variation>
    <location>
        <position position="1061"/>
    </location>
</feature>
<feature type="sequence conflict" description="In Ref. 1; AAB08527." evidence="7" ref="1">
    <original>EL</original>
    <variation>DV</variation>
    <location>
        <begin position="1126"/>
        <end position="1127"/>
    </location>
</feature>
<feature type="sequence conflict" description="In Ref. 1; AAB08527." evidence="7" ref="1">
    <original>LR</original>
    <variation>RG</variation>
    <location>
        <begin position="1158"/>
        <end position="1159"/>
    </location>
</feature>
<feature type="sequence conflict" description="In Ref. 1; AAB08527." evidence="7" ref="1">
    <original>Y</original>
    <variation>D</variation>
    <location>
        <position position="1241"/>
    </location>
</feature>
<feature type="sequence conflict" description="In Ref. 1; AAB08527." evidence="7" ref="1">
    <original>L</original>
    <variation>Q</variation>
    <location>
        <position position="1294"/>
    </location>
</feature>
<feature type="sequence conflict" description="In Ref. 1; AAB08527." evidence="7" ref="1">
    <original>Q</original>
    <variation>QQ</variation>
    <location>
        <position position="1297"/>
    </location>
</feature>
<feature type="sequence conflict" description="In Ref. 1; AAB08527." evidence="7" ref="1">
    <original>V</original>
    <variation>A</variation>
    <location>
        <position position="1594"/>
    </location>
</feature>
<feature type="sequence conflict" description="In Ref. 1; AAB08527." evidence="7" ref="1">
    <original>R</original>
    <variation>P</variation>
    <location>
        <position position="1693"/>
    </location>
</feature>
<feature type="sequence conflict" description="In Ref. 1; AAB08527." evidence="7" ref="1">
    <original>R</original>
    <variation>L</variation>
    <location>
        <position position="1787"/>
    </location>
</feature>
<feature type="sequence conflict" description="In Ref. 1; AAB08527." evidence="7" ref="1">
    <original>V</original>
    <variation>A</variation>
    <location>
        <position position="1803"/>
    </location>
</feature>
<feature type="sequence conflict" description="In Ref. 1; AAB08527." evidence="7" ref="1">
    <original>LR</original>
    <variation>FA</variation>
    <location>
        <begin position="1808"/>
        <end position="1809"/>
    </location>
</feature>
<feature type="sequence conflict" description="In Ref. 1; AAB08527." evidence="7" ref="1">
    <original>A</original>
    <variation>V</variation>
    <location>
        <position position="1978"/>
    </location>
</feature>
<feature type="sequence conflict" description="In Ref. 1; AAB08527." evidence="7" ref="1">
    <location>
        <position position="2039"/>
    </location>
</feature>
<feature type="sequence conflict" description="In Ref. 1; AAB08527." evidence="7" ref="1">
    <original>D</original>
    <variation>E</variation>
    <location>
        <position position="2089"/>
    </location>
</feature>
<evidence type="ECO:0000255" key="1">
    <source>
        <dbReference type="PROSITE-ProRule" id="PRU00148"/>
    </source>
</evidence>
<evidence type="ECO:0000256" key="2">
    <source>
        <dbReference type="SAM" id="MobiDB-lite"/>
    </source>
</evidence>
<evidence type="ECO:0000269" key="3">
    <source>
    </source>
</evidence>
<evidence type="ECO:0000269" key="4">
    <source>
    </source>
</evidence>
<evidence type="ECO:0000269" key="5">
    <source>
    </source>
</evidence>
<evidence type="ECO:0000303" key="6">
    <source>
    </source>
</evidence>
<evidence type="ECO:0000305" key="7"/>
<evidence type="ECO:0000305" key="8">
    <source>
    </source>
</evidence>
<keyword id="KW-0025">Alternative splicing</keyword>
<keyword id="KW-0963">Cytoplasm</keyword>
<keyword id="KW-0217">Developmental protein</keyword>
<keyword id="KW-0221">Differentiation</keyword>
<keyword id="KW-0524">Neurogenesis</keyword>
<keyword id="KW-0597">Phosphoprotein</keyword>
<keyword id="KW-1185">Reference proteome</keyword>
<keyword id="KW-0677">Repeat</keyword>
<keyword id="KW-0729">SH3-binding</keyword>